<gene>
    <name evidence="1" type="primary">katG</name>
    <name type="ordered locus">Bmul_2660</name>
    <name type="ordered locus">BMULJ_00578</name>
</gene>
<accession>A9AGE5</accession>
<accession>B3CXN0</accession>
<dbReference type="EC" id="1.11.1.21" evidence="1"/>
<dbReference type="EMBL" id="CP000868">
    <property type="protein sequence ID" value="ABX16344.1"/>
    <property type="status" value="ALT_INIT"/>
    <property type="molecule type" value="Genomic_DNA"/>
</dbReference>
<dbReference type="EMBL" id="AP009385">
    <property type="protein sequence ID" value="BAG42542.1"/>
    <property type="molecule type" value="Genomic_DNA"/>
</dbReference>
<dbReference type="RefSeq" id="WP_012467484.1">
    <property type="nucleotide sequence ID" value="NC_010084.1"/>
</dbReference>
<dbReference type="SMR" id="A9AGE5"/>
<dbReference type="STRING" id="395019.BMULJ_00578"/>
<dbReference type="KEGG" id="bmj:BMULJ_00578"/>
<dbReference type="KEGG" id="bmu:Bmul_2660"/>
<dbReference type="eggNOG" id="COG0376">
    <property type="taxonomic scope" value="Bacteria"/>
</dbReference>
<dbReference type="HOGENOM" id="CLU_025424_2_0_4"/>
<dbReference type="Proteomes" id="UP000008815">
    <property type="component" value="Chromosome 1"/>
</dbReference>
<dbReference type="GO" id="GO:0005829">
    <property type="term" value="C:cytosol"/>
    <property type="evidence" value="ECO:0007669"/>
    <property type="project" value="TreeGrafter"/>
</dbReference>
<dbReference type="GO" id="GO:0004096">
    <property type="term" value="F:catalase activity"/>
    <property type="evidence" value="ECO:0007669"/>
    <property type="project" value="UniProtKB-UniRule"/>
</dbReference>
<dbReference type="GO" id="GO:0020037">
    <property type="term" value="F:heme binding"/>
    <property type="evidence" value="ECO:0007669"/>
    <property type="project" value="InterPro"/>
</dbReference>
<dbReference type="GO" id="GO:0046872">
    <property type="term" value="F:metal ion binding"/>
    <property type="evidence" value="ECO:0007669"/>
    <property type="project" value="UniProtKB-KW"/>
</dbReference>
<dbReference type="GO" id="GO:0070301">
    <property type="term" value="P:cellular response to hydrogen peroxide"/>
    <property type="evidence" value="ECO:0007669"/>
    <property type="project" value="TreeGrafter"/>
</dbReference>
<dbReference type="GO" id="GO:0042744">
    <property type="term" value="P:hydrogen peroxide catabolic process"/>
    <property type="evidence" value="ECO:0007669"/>
    <property type="project" value="UniProtKB-KW"/>
</dbReference>
<dbReference type="CDD" id="cd00649">
    <property type="entry name" value="catalase_peroxidase_1"/>
    <property type="match status" value="1"/>
</dbReference>
<dbReference type="CDD" id="cd08200">
    <property type="entry name" value="catalase_peroxidase_2"/>
    <property type="match status" value="1"/>
</dbReference>
<dbReference type="FunFam" id="1.10.420.10:FF:000002">
    <property type="entry name" value="Catalase-peroxidase"/>
    <property type="match status" value="1"/>
</dbReference>
<dbReference type="FunFam" id="1.10.420.10:FF:000004">
    <property type="entry name" value="Catalase-peroxidase"/>
    <property type="match status" value="1"/>
</dbReference>
<dbReference type="FunFam" id="1.10.520.10:FF:000002">
    <property type="entry name" value="Catalase-peroxidase"/>
    <property type="match status" value="1"/>
</dbReference>
<dbReference type="FunFam" id="1.10.520.10:FF:000004">
    <property type="entry name" value="Catalase-peroxidase"/>
    <property type="match status" value="1"/>
</dbReference>
<dbReference type="Gene3D" id="1.10.520.10">
    <property type="match status" value="2"/>
</dbReference>
<dbReference type="Gene3D" id="1.10.420.10">
    <property type="entry name" value="Peroxidase, domain 2"/>
    <property type="match status" value="2"/>
</dbReference>
<dbReference type="HAMAP" id="MF_01961">
    <property type="entry name" value="Catal_peroxid"/>
    <property type="match status" value="1"/>
</dbReference>
<dbReference type="InterPro" id="IPR000763">
    <property type="entry name" value="Catalase_peroxidase"/>
</dbReference>
<dbReference type="InterPro" id="IPR002016">
    <property type="entry name" value="Haem_peroxidase"/>
</dbReference>
<dbReference type="InterPro" id="IPR010255">
    <property type="entry name" value="Haem_peroxidase_sf"/>
</dbReference>
<dbReference type="InterPro" id="IPR019794">
    <property type="entry name" value="Peroxidases_AS"/>
</dbReference>
<dbReference type="InterPro" id="IPR019793">
    <property type="entry name" value="Peroxidases_heam-ligand_BS"/>
</dbReference>
<dbReference type="NCBIfam" id="TIGR00198">
    <property type="entry name" value="cat_per_HPI"/>
    <property type="match status" value="1"/>
</dbReference>
<dbReference type="NCBIfam" id="NF011635">
    <property type="entry name" value="PRK15061.1"/>
    <property type="match status" value="1"/>
</dbReference>
<dbReference type="PANTHER" id="PTHR30555:SF0">
    <property type="entry name" value="CATALASE-PEROXIDASE"/>
    <property type="match status" value="1"/>
</dbReference>
<dbReference type="PANTHER" id="PTHR30555">
    <property type="entry name" value="HYDROPEROXIDASE I, BIFUNCTIONAL CATALASE-PEROXIDASE"/>
    <property type="match status" value="1"/>
</dbReference>
<dbReference type="Pfam" id="PF00141">
    <property type="entry name" value="peroxidase"/>
    <property type="match status" value="2"/>
</dbReference>
<dbReference type="PRINTS" id="PR00460">
    <property type="entry name" value="BPEROXIDASE"/>
</dbReference>
<dbReference type="PRINTS" id="PR00458">
    <property type="entry name" value="PEROXIDASE"/>
</dbReference>
<dbReference type="SUPFAM" id="SSF48113">
    <property type="entry name" value="Heme-dependent peroxidases"/>
    <property type="match status" value="2"/>
</dbReference>
<dbReference type="PROSITE" id="PS00435">
    <property type="entry name" value="PEROXIDASE_1"/>
    <property type="match status" value="1"/>
</dbReference>
<dbReference type="PROSITE" id="PS00436">
    <property type="entry name" value="PEROXIDASE_2"/>
    <property type="match status" value="1"/>
</dbReference>
<dbReference type="PROSITE" id="PS50873">
    <property type="entry name" value="PEROXIDASE_4"/>
    <property type="match status" value="1"/>
</dbReference>
<evidence type="ECO:0000255" key="1">
    <source>
        <dbReference type="HAMAP-Rule" id="MF_01961"/>
    </source>
</evidence>
<evidence type="ECO:0000305" key="2"/>
<comment type="function">
    <text evidence="1">Bifunctional enzyme with both catalase and broad-spectrum peroxidase activity.</text>
</comment>
<comment type="catalytic activity">
    <reaction evidence="1">
        <text>H2O2 + AH2 = A + 2 H2O</text>
        <dbReference type="Rhea" id="RHEA:30275"/>
        <dbReference type="ChEBI" id="CHEBI:13193"/>
        <dbReference type="ChEBI" id="CHEBI:15377"/>
        <dbReference type="ChEBI" id="CHEBI:16240"/>
        <dbReference type="ChEBI" id="CHEBI:17499"/>
        <dbReference type="EC" id="1.11.1.21"/>
    </reaction>
</comment>
<comment type="catalytic activity">
    <reaction evidence="1">
        <text>2 H2O2 = O2 + 2 H2O</text>
        <dbReference type="Rhea" id="RHEA:20309"/>
        <dbReference type="ChEBI" id="CHEBI:15377"/>
        <dbReference type="ChEBI" id="CHEBI:15379"/>
        <dbReference type="ChEBI" id="CHEBI:16240"/>
        <dbReference type="EC" id="1.11.1.21"/>
    </reaction>
</comment>
<comment type="cofactor">
    <cofactor evidence="1">
        <name>heme b</name>
        <dbReference type="ChEBI" id="CHEBI:60344"/>
    </cofactor>
    <text evidence="1">Binds 1 heme b (iron(II)-protoporphyrin IX) group per dimer.</text>
</comment>
<comment type="subunit">
    <text evidence="1">Homodimer or homotetramer.</text>
</comment>
<comment type="PTM">
    <text evidence="1">Formation of the three residue Trp-Tyr-Met cross-link is important for the catalase, but not the peroxidase activity of the enzyme.</text>
</comment>
<comment type="similarity">
    <text evidence="1">Belongs to the peroxidase family. Peroxidase/catalase subfamily.</text>
</comment>
<comment type="sequence caution" evidence="2">
    <conflict type="erroneous initiation">
        <sequence resource="EMBL-CDS" id="ABX16344"/>
    </conflict>
</comment>
<feature type="chain" id="PRO_0000354745" description="Catalase-peroxidase">
    <location>
        <begin position="1"/>
        <end position="728"/>
    </location>
</feature>
<feature type="active site" description="Proton acceptor" evidence="1">
    <location>
        <position position="92"/>
    </location>
</feature>
<feature type="binding site" description="axial binding residue" evidence="1">
    <location>
        <position position="259"/>
    </location>
    <ligand>
        <name>heme b</name>
        <dbReference type="ChEBI" id="CHEBI:60344"/>
    </ligand>
    <ligandPart>
        <name>Fe</name>
        <dbReference type="ChEBI" id="CHEBI:18248"/>
    </ligandPart>
</feature>
<feature type="site" description="Transition state stabilizer" evidence="1">
    <location>
        <position position="88"/>
    </location>
</feature>
<feature type="cross-link" description="Tryptophyl-tyrosyl-methioninium (Trp-Tyr) (with M-244)" evidence="1">
    <location>
        <begin position="91"/>
        <end position="218"/>
    </location>
</feature>
<feature type="cross-link" description="Tryptophyl-tyrosyl-methioninium (Tyr-Met) (with W-91)" evidence="1">
    <location>
        <begin position="218"/>
        <end position="244"/>
    </location>
</feature>
<protein>
    <recommendedName>
        <fullName evidence="1">Catalase-peroxidase</fullName>
        <shortName evidence="1">CP</shortName>
        <ecNumber evidence="1">1.11.1.21</ecNumber>
    </recommendedName>
    <alternativeName>
        <fullName evidence="1">Peroxidase/catalase</fullName>
    </alternativeName>
</protein>
<proteinExistence type="inferred from homology"/>
<name>KATG_BURM1</name>
<sequence>MSTEPKCPFHHTAGSGTSNKDWWPNQINLNILHRHSSLSDPMDKDFNYAEAFKQLDLAAVKRDLHALMTTSQDWWPADFGHYGGLFIRMAWHSAGTYRIADGRGGAGGGQQRFAPLNSWPDNANLDKARRLLWPIKQKYGRNISWADLLILTGNVALESMGFKTFGYAGGRPDTWEPDDVYWGSEKIWLELSGGPNSRYSGNRELENPLAAVQMGLIYVNPEGPDGNPDPVAAARDIRETFARMAMNDEETVALIAGGHTFGKTHGAGPASSVGPEPEAAALEQQGLGWQSTFGTGKGKDAITSGLEVTWTSTPTKWSNDFFKHLFSYEWELTKSPAGAHQWVAKDAEAVIPDAFDPSKKHRPTMLTTDLALRFDPEYEKISRRFYEHPDQFADAFARAWFKLTHRDMGPRSRYLGPDVPAEELLWQDPVPAVDHPLIDEADIAALKAKVLASGLSVSQLVSTAWASASTFRGSDKRGGANGARIRLAPQKDWEVNRPAELAAVLETLEGVRKAFNDAQTGGKRVSLADLIVLAGAAGVEQAAKNAGVAVTVPFAPGRTDASQEQTDVHAMAVLEPVADGFRNYLKRKFKTPAEALLVDKAQLLTLTAPEMTVLVGGMRVLGTNVGDPKHGVFTERPGTLTNDFFVNLLDMRTEWKPASADNDVFEGRDRATGELKWTGTRVDLVFGSHSQLRALAEVYGSADAQQKFVHDFVAAWNKVMNLDRFDLV</sequence>
<organism>
    <name type="scientific">Burkholderia multivorans (strain ATCC 17616 / 249)</name>
    <dbReference type="NCBI Taxonomy" id="395019"/>
    <lineage>
        <taxon>Bacteria</taxon>
        <taxon>Pseudomonadati</taxon>
        <taxon>Pseudomonadota</taxon>
        <taxon>Betaproteobacteria</taxon>
        <taxon>Burkholderiales</taxon>
        <taxon>Burkholderiaceae</taxon>
        <taxon>Burkholderia</taxon>
        <taxon>Burkholderia cepacia complex</taxon>
    </lineage>
</organism>
<keyword id="KW-0349">Heme</keyword>
<keyword id="KW-0376">Hydrogen peroxide</keyword>
<keyword id="KW-0408">Iron</keyword>
<keyword id="KW-0479">Metal-binding</keyword>
<keyword id="KW-0560">Oxidoreductase</keyword>
<keyword id="KW-0575">Peroxidase</keyword>
<keyword id="KW-1185">Reference proteome</keyword>
<reference key="1">
    <citation type="submission" date="2007-10" db="EMBL/GenBank/DDBJ databases">
        <title>Complete sequence of chromosome 1 of Burkholderia multivorans ATCC 17616.</title>
        <authorList>
            <person name="Copeland A."/>
            <person name="Lucas S."/>
            <person name="Lapidus A."/>
            <person name="Barry K."/>
            <person name="Glavina del Rio T."/>
            <person name="Dalin E."/>
            <person name="Tice H."/>
            <person name="Pitluck S."/>
            <person name="Chain P."/>
            <person name="Malfatti S."/>
            <person name="Shin M."/>
            <person name="Vergez L."/>
            <person name="Schmutz J."/>
            <person name="Larimer F."/>
            <person name="Land M."/>
            <person name="Hauser L."/>
            <person name="Kyrpides N."/>
            <person name="Kim E."/>
            <person name="Tiedje J."/>
            <person name="Richardson P."/>
        </authorList>
    </citation>
    <scope>NUCLEOTIDE SEQUENCE [LARGE SCALE GENOMIC DNA]</scope>
    <source>
        <strain>ATCC 17616 / 249</strain>
    </source>
</reference>
<reference key="2">
    <citation type="submission" date="2007-04" db="EMBL/GenBank/DDBJ databases">
        <title>Complete genome sequence of Burkholderia multivorans ATCC 17616.</title>
        <authorList>
            <person name="Ohtsubo Y."/>
            <person name="Yamashita A."/>
            <person name="Kurokawa K."/>
            <person name="Takami H."/>
            <person name="Yuhara S."/>
            <person name="Nishiyama E."/>
            <person name="Endo R."/>
            <person name="Miyazaki R."/>
            <person name="Ono A."/>
            <person name="Yano K."/>
            <person name="Ito M."/>
            <person name="Sota M."/>
            <person name="Yuji N."/>
            <person name="Hattori M."/>
            <person name="Tsuda M."/>
        </authorList>
    </citation>
    <scope>NUCLEOTIDE SEQUENCE [LARGE SCALE GENOMIC DNA]</scope>
    <source>
        <strain>ATCC 17616 / 249</strain>
    </source>
</reference>